<accession>A1IPX2</accession>
<reference key="1">
    <citation type="journal article" date="2000" name="Nature">
        <title>Complete DNA sequence of a serogroup A strain of Neisseria meningitidis Z2491.</title>
        <authorList>
            <person name="Parkhill J."/>
            <person name="Achtman M."/>
            <person name="James K.D."/>
            <person name="Bentley S.D."/>
            <person name="Churcher C.M."/>
            <person name="Klee S.R."/>
            <person name="Morelli G."/>
            <person name="Basham D."/>
            <person name="Brown D."/>
            <person name="Chillingworth T."/>
            <person name="Davies R.M."/>
            <person name="Davis P."/>
            <person name="Devlin K."/>
            <person name="Feltwell T."/>
            <person name="Hamlin N."/>
            <person name="Holroyd S."/>
            <person name="Jagels K."/>
            <person name="Leather S."/>
            <person name="Moule S."/>
            <person name="Mungall K.L."/>
            <person name="Quail M.A."/>
            <person name="Rajandream M.A."/>
            <person name="Rutherford K.M."/>
            <person name="Simmonds M."/>
            <person name="Skelton J."/>
            <person name="Whitehead S."/>
            <person name="Spratt B.G."/>
            <person name="Barrell B.G."/>
        </authorList>
    </citation>
    <scope>NUCLEOTIDE SEQUENCE [LARGE SCALE GENOMIC DNA]</scope>
    <source>
        <strain>DSM 15465 / Z2491</strain>
    </source>
</reference>
<gene>
    <name evidence="1" type="primary">atpH</name>
    <name type="ordered locus">NMA0516</name>
</gene>
<name>ATPD_NEIMA</name>
<dbReference type="EMBL" id="AL157959">
    <property type="protein sequence ID" value="CAM07793.1"/>
    <property type="molecule type" value="Genomic_DNA"/>
</dbReference>
<dbReference type="PIR" id="H81969">
    <property type="entry name" value="H81969"/>
</dbReference>
<dbReference type="RefSeq" id="WP_002221463.1">
    <property type="nucleotide sequence ID" value="NC_003116.1"/>
</dbReference>
<dbReference type="SMR" id="A1IPX2"/>
<dbReference type="EnsemblBacteria" id="CAM07793">
    <property type="protein sequence ID" value="CAM07793"/>
    <property type="gene ID" value="NMA0516"/>
</dbReference>
<dbReference type="KEGG" id="nma:NMA0516"/>
<dbReference type="HOGENOM" id="CLU_085114_3_0_4"/>
<dbReference type="Proteomes" id="UP000000626">
    <property type="component" value="Chromosome"/>
</dbReference>
<dbReference type="GO" id="GO:0005886">
    <property type="term" value="C:plasma membrane"/>
    <property type="evidence" value="ECO:0007669"/>
    <property type="project" value="UniProtKB-SubCell"/>
</dbReference>
<dbReference type="GO" id="GO:0045259">
    <property type="term" value="C:proton-transporting ATP synthase complex"/>
    <property type="evidence" value="ECO:0007669"/>
    <property type="project" value="UniProtKB-KW"/>
</dbReference>
<dbReference type="GO" id="GO:0046933">
    <property type="term" value="F:proton-transporting ATP synthase activity, rotational mechanism"/>
    <property type="evidence" value="ECO:0007669"/>
    <property type="project" value="UniProtKB-UniRule"/>
</dbReference>
<dbReference type="Gene3D" id="1.10.520.20">
    <property type="entry name" value="N-terminal domain of the delta subunit of the F1F0-ATP synthase"/>
    <property type="match status" value="1"/>
</dbReference>
<dbReference type="HAMAP" id="MF_01416">
    <property type="entry name" value="ATP_synth_delta_bact"/>
    <property type="match status" value="1"/>
</dbReference>
<dbReference type="InterPro" id="IPR026015">
    <property type="entry name" value="ATP_synth_OSCP/delta_N_sf"/>
</dbReference>
<dbReference type="InterPro" id="IPR020781">
    <property type="entry name" value="ATPase_OSCP/d_CS"/>
</dbReference>
<dbReference type="InterPro" id="IPR000711">
    <property type="entry name" value="ATPase_OSCP/dsu"/>
</dbReference>
<dbReference type="NCBIfam" id="TIGR01145">
    <property type="entry name" value="ATP_synt_delta"/>
    <property type="match status" value="1"/>
</dbReference>
<dbReference type="NCBIfam" id="NF004402">
    <property type="entry name" value="PRK05758.2-2"/>
    <property type="match status" value="1"/>
</dbReference>
<dbReference type="PANTHER" id="PTHR11910">
    <property type="entry name" value="ATP SYNTHASE DELTA CHAIN"/>
    <property type="match status" value="1"/>
</dbReference>
<dbReference type="Pfam" id="PF00213">
    <property type="entry name" value="OSCP"/>
    <property type="match status" value="1"/>
</dbReference>
<dbReference type="PRINTS" id="PR00125">
    <property type="entry name" value="ATPASEDELTA"/>
</dbReference>
<dbReference type="SUPFAM" id="SSF47928">
    <property type="entry name" value="N-terminal domain of the delta subunit of the F1F0-ATP synthase"/>
    <property type="match status" value="1"/>
</dbReference>
<dbReference type="PROSITE" id="PS00389">
    <property type="entry name" value="ATPASE_DELTA"/>
    <property type="match status" value="1"/>
</dbReference>
<organism>
    <name type="scientific">Neisseria meningitidis serogroup A / serotype 4A (strain DSM 15465 / Z2491)</name>
    <dbReference type="NCBI Taxonomy" id="122587"/>
    <lineage>
        <taxon>Bacteria</taxon>
        <taxon>Pseudomonadati</taxon>
        <taxon>Pseudomonadota</taxon>
        <taxon>Betaproteobacteria</taxon>
        <taxon>Neisseriales</taxon>
        <taxon>Neisseriaceae</taxon>
        <taxon>Neisseria</taxon>
    </lineage>
</organism>
<sequence>MAEFATIARPYAKALFGLAQEKSQIESWLGGLEKLAAVVQEGKVASLIDRPETNASEKADILIDLVGLKDKELKNFVIVLAGQKRLSILPEVYAQYQDLTLSFNHIKSAVIYSAYPLTDKQVGELAQMLNKRFDSELKISVEIEPELIGGIKVEVGDQVLDLSVQGKLSALYTTMTN</sequence>
<evidence type="ECO:0000255" key="1">
    <source>
        <dbReference type="HAMAP-Rule" id="MF_01416"/>
    </source>
</evidence>
<proteinExistence type="inferred from homology"/>
<protein>
    <recommendedName>
        <fullName evidence="1">ATP synthase subunit delta</fullName>
    </recommendedName>
    <alternativeName>
        <fullName evidence="1">ATP synthase F(1) sector subunit delta</fullName>
    </alternativeName>
    <alternativeName>
        <fullName evidence="1">F-type ATPase subunit delta</fullName>
        <shortName evidence="1">F-ATPase subunit delta</shortName>
    </alternativeName>
</protein>
<keyword id="KW-0066">ATP synthesis</keyword>
<keyword id="KW-0997">Cell inner membrane</keyword>
<keyword id="KW-1003">Cell membrane</keyword>
<keyword id="KW-0139">CF(1)</keyword>
<keyword id="KW-0375">Hydrogen ion transport</keyword>
<keyword id="KW-0406">Ion transport</keyword>
<keyword id="KW-0472">Membrane</keyword>
<keyword id="KW-0813">Transport</keyword>
<feature type="chain" id="PRO_0000371034" description="ATP synthase subunit delta">
    <location>
        <begin position="1"/>
        <end position="177"/>
    </location>
</feature>
<comment type="function">
    <text evidence="1">F(1)F(0) ATP synthase produces ATP from ADP in the presence of a proton or sodium gradient. F-type ATPases consist of two structural domains, F(1) containing the extramembraneous catalytic core and F(0) containing the membrane proton channel, linked together by a central stalk and a peripheral stalk. During catalysis, ATP synthesis in the catalytic domain of F(1) is coupled via a rotary mechanism of the central stalk subunits to proton translocation.</text>
</comment>
<comment type="function">
    <text evidence="1">This protein is part of the stalk that links CF(0) to CF(1). It either transmits conformational changes from CF(0) to CF(1) or is implicated in proton conduction.</text>
</comment>
<comment type="subunit">
    <text evidence="1">F-type ATPases have 2 components, F(1) - the catalytic core - and F(0) - the membrane proton channel. F(1) has five subunits: alpha(3), beta(3), gamma(1), delta(1), epsilon(1). F(0) has three main subunits: a(1), b(2) and c(10-14). The alpha and beta chains form an alternating ring which encloses part of the gamma chain. F(1) is attached to F(0) by a central stalk formed by the gamma and epsilon chains, while a peripheral stalk is formed by the delta and b chains.</text>
</comment>
<comment type="subcellular location">
    <subcellularLocation>
        <location evidence="1">Cell inner membrane</location>
        <topology evidence="1">Peripheral membrane protein</topology>
    </subcellularLocation>
</comment>
<comment type="similarity">
    <text evidence="1">Belongs to the ATPase delta chain family.</text>
</comment>